<name>RUVB_EHRCJ</name>
<reference key="1">
    <citation type="journal article" date="2006" name="J. Bacteriol.">
        <title>The genome of the obligately intracellular bacterium Ehrlichia canis reveals themes of complex membrane structure and immune evasion strategies.</title>
        <authorList>
            <person name="Mavromatis K."/>
            <person name="Doyle C.K."/>
            <person name="Lykidis A."/>
            <person name="Ivanova N."/>
            <person name="Francino M.P."/>
            <person name="Chain P."/>
            <person name="Shin M."/>
            <person name="Malfatti S."/>
            <person name="Larimer F."/>
            <person name="Copeland A."/>
            <person name="Detter J.C."/>
            <person name="Land M."/>
            <person name="Richardson P.M."/>
            <person name="Yu X.J."/>
            <person name="Walker D.H."/>
            <person name="McBride J.W."/>
            <person name="Kyrpides N.C."/>
        </authorList>
    </citation>
    <scope>NUCLEOTIDE SEQUENCE [LARGE SCALE GENOMIC DNA]</scope>
    <source>
        <strain>Jake</strain>
    </source>
</reference>
<gene>
    <name evidence="1" type="primary">ruvB</name>
    <name type="ordered locus">Ecaj_0684</name>
</gene>
<comment type="function">
    <text evidence="1">The RuvA-RuvB-RuvC complex processes Holliday junction (HJ) DNA during genetic recombination and DNA repair, while the RuvA-RuvB complex plays an important role in the rescue of blocked DNA replication forks via replication fork reversal (RFR). RuvA specifically binds to HJ cruciform DNA, conferring on it an open structure. The RuvB hexamer acts as an ATP-dependent pump, pulling dsDNA into and through the RuvAB complex. RuvB forms 2 homohexamers on either side of HJ DNA bound by 1 or 2 RuvA tetramers; 4 subunits per hexamer contact DNA at a time. Coordinated motions by a converter formed by DNA-disengaged RuvB subunits stimulates ATP hydrolysis and nucleotide exchange. Immobilization of the converter enables RuvB to convert the ATP-contained energy into a lever motion, pulling 2 nucleotides of DNA out of the RuvA tetramer per ATP hydrolyzed, thus driving DNA branch migration. The RuvB motors rotate together with the DNA substrate, which together with the progressing nucleotide cycle form the mechanistic basis for DNA recombination by continuous HJ branch migration. Branch migration allows RuvC to scan DNA until it finds its consensus sequence, where it cleaves and resolves cruciform DNA.</text>
</comment>
<comment type="catalytic activity">
    <reaction evidence="1">
        <text>ATP + H2O = ADP + phosphate + H(+)</text>
        <dbReference type="Rhea" id="RHEA:13065"/>
        <dbReference type="ChEBI" id="CHEBI:15377"/>
        <dbReference type="ChEBI" id="CHEBI:15378"/>
        <dbReference type="ChEBI" id="CHEBI:30616"/>
        <dbReference type="ChEBI" id="CHEBI:43474"/>
        <dbReference type="ChEBI" id="CHEBI:456216"/>
    </reaction>
</comment>
<comment type="subunit">
    <text evidence="1">Homohexamer. Forms an RuvA(8)-RuvB(12)-Holliday junction (HJ) complex. HJ DNA is sandwiched between 2 RuvA tetramers; dsDNA enters through RuvA and exits via RuvB. An RuvB hexamer assembles on each DNA strand where it exits the tetramer. Each RuvB hexamer is contacted by two RuvA subunits (via domain III) on 2 adjacent RuvB subunits; this complex drives branch migration. In the full resolvosome a probable DNA-RuvA(4)-RuvB(12)-RuvC(2) complex forms which resolves the HJ.</text>
</comment>
<comment type="subcellular location">
    <subcellularLocation>
        <location evidence="1">Cytoplasm</location>
    </subcellularLocation>
</comment>
<comment type="domain">
    <text evidence="1">Has 3 domains, the large (RuvB-L) and small ATPase (RuvB-S) domains and the C-terminal head (RuvB-H) domain. The head domain binds DNA, while the ATPase domains jointly bind ATP, ADP or are empty depending on the state of the subunit in the translocation cycle. During a single DNA translocation step the structure of each domain remains the same, but their relative positions change.</text>
</comment>
<comment type="similarity">
    <text evidence="1">Belongs to the RuvB family.</text>
</comment>
<feature type="chain" id="PRO_0000235366" description="Holliday junction branch migration complex subunit RuvB">
    <location>
        <begin position="1"/>
        <end position="329"/>
    </location>
</feature>
<feature type="region of interest" description="Large ATPase domain (RuvB-L)" evidence="1">
    <location>
        <begin position="1"/>
        <end position="180"/>
    </location>
</feature>
<feature type="region of interest" description="Small ATPAse domain (RuvB-S)" evidence="1">
    <location>
        <begin position="181"/>
        <end position="252"/>
    </location>
</feature>
<feature type="region of interest" description="Head domain (RuvB-H)" evidence="1">
    <location>
        <begin position="255"/>
        <end position="329"/>
    </location>
</feature>
<feature type="binding site" evidence="1">
    <location>
        <position position="19"/>
    </location>
    <ligand>
        <name>ATP</name>
        <dbReference type="ChEBI" id="CHEBI:30616"/>
    </ligand>
</feature>
<feature type="binding site" evidence="1">
    <location>
        <position position="20"/>
    </location>
    <ligand>
        <name>ATP</name>
        <dbReference type="ChEBI" id="CHEBI:30616"/>
    </ligand>
</feature>
<feature type="binding site" evidence="1">
    <location>
        <position position="61"/>
    </location>
    <ligand>
        <name>ATP</name>
        <dbReference type="ChEBI" id="CHEBI:30616"/>
    </ligand>
</feature>
<feature type="binding site" evidence="1">
    <location>
        <position position="64"/>
    </location>
    <ligand>
        <name>ATP</name>
        <dbReference type="ChEBI" id="CHEBI:30616"/>
    </ligand>
</feature>
<feature type="binding site" evidence="1">
    <location>
        <position position="65"/>
    </location>
    <ligand>
        <name>ATP</name>
        <dbReference type="ChEBI" id="CHEBI:30616"/>
    </ligand>
</feature>
<feature type="binding site" evidence="1">
    <location>
        <position position="65"/>
    </location>
    <ligand>
        <name>Mg(2+)</name>
        <dbReference type="ChEBI" id="CHEBI:18420"/>
    </ligand>
</feature>
<feature type="binding site" evidence="1">
    <location>
        <position position="66"/>
    </location>
    <ligand>
        <name>ATP</name>
        <dbReference type="ChEBI" id="CHEBI:30616"/>
    </ligand>
</feature>
<feature type="binding site" evidence="1">
    <location>
        <begin position="127"/>
        <end position="129"/>
    </location>
    <ligand>
        <name>ATP</name>
        <dbReference type="ChEBI" id="CHEBI:30616"/>
    </ligand>
</feature>
<feature type="binding site" evidence="1">
    <location>
        <position position="170"/>
    </location>
    <ligand>
        <name>ATP</name>
        <dbReference type="ChEBI" id="CHEBI:30616"/>
    </ligand>
</feature>
<feature type="binding site" evidence="1">
    <location>
        <position position="180"/>
    </location>
    <ligand>
        <name>ATP</name>
        <dbReference type="ChEBI" id="CHEBI:30616"/>
    </ligand>
</feature>
<feature type="binding site" evidence="1">
    <location>
        <position position="217"/>
    </location>
    <ligand>
        <name>ATP</name>
        <dbReference type="ChEBI" id="CHEBI:30616"/>
    </ligand>
</feature>
<feature type="binding site" evidence="1">
    <location>
        <position position="308"/>
    </location>
    <ligand>
        <name>DNA</name>
        <dbReference type="ChEBI" id="CHEBI:16991"/>
    </ligand>
</feature>
<feature type="binding site" evidence="1">
    <location>
        <position position="313"/>
    </location>
    <ligand>
        <name>DNA</name>
        <dbReference type="ChEBI" id="CHEBI:16991"/>
    </ligand>
</feature>
<evidence type="ECO:0000255" key="1">
    <source>
        <dbReference type="HAMAP-Rule" id="MF_00016"/>
    </source>
</evidence>
<protein>
    <recommendedName>
        <fullName evidence="1">Holliday junction branch migration complex subunit RuvB</fullName>
        <ecNumber evidence="1">3.6.4.-</ecNumber>
    </recommendedName>
</protein>
<keyword id="KW-0067">ATP-binding</keyword>
<keyword id="KW-0963">Cytoplasm</keyword>
<keyword id="KW-0227">DNA damage</keyword>
<keyword id="KW-0233">DNA recombination</keyword>
<keyword id="KW-0234">DNA repair</keyword>
<keyword id="KW-0238">DNA-binding</keyword>
<keyword id="KW-0378">Hydrolase</keyword>
<keyword id="KW-0547">Nucleotide-binding</keyword>
<proteinExistence type="inferred from homology"/>
<accession>Q3YRD9</accession>
<dbReference type="EC" id="3.6.4.-" evidence="1"/>
<dbReference type="EMBL" id="CP000107">
    <property type="protein sequence ID" value="AAZ68716.1"/>
    <property type="molecule type" value="Genomic_DNA"/>
</dbReference>
<dbReference type="RefSeq" id="WP_011304793.1">
    <property type="nucleotide sequence ID" value="NC_007354.1"/>
</dbReference>
<dbReference type="SMR" id="Q3YRD9"/>
<dbReference type="FunCoup" id="Q3YRD9">
    <property type="interactions" value="159"/>
</dbReference>
<dbReference type="STRING" id="269484.Ecaj_0684"/>
<dbReference type="KEGG" id="ecn:Ecaj_0684"/>
<dbReference type="eggNOG" id="COG2255">
    <property type="taxonomic scope" value="Bacteria"/>
</dbReference>
<dbReference type="HOGENOM" id="CLU_055599_1_0_5"/>
<dbReference type="InParanoid" id="Q3YRD9"/>
<dbReference type="Proteomes" id="UP000000435">
    <property type="component" value="Chromosome"/>
</dbReference>
<dbReference type="GO" id="GO:0005737">
    <property type="term" value="C:cytoplasm"/>
    <property type="evidence" value="ECO:0007669"/>
    <property type="project" value="UniProtKB-SubCell"/>
</dbReference>
<dbReference type="GO" id="GO:0048476">
    <property type="term" value="C:Holliday junction resolvase complex"/>
    <property type="evidence" value="ECO:0007669"/>
    <property type="project" value="UniProtKB-UniRule"/>
</dbReference>
<dbReference type="GO" id="GO:0005524">
    <property type="term" value="F:ATP binding"/>
    <property type="evidence" value="ECO:0007669"/>
    <property type="project" value="UniProtKB-UniRule"/>
</dbReference>
<dbReference type="GO" id="GO:0016887">
    <property type="term" value="F:ATP hydrolysis activity"/>
    <property type="evidence" value="ECO:0007669"/>
    <property type="project" value="InterPro"/>
</dbReference>
<dbReference type="GO" id="GO:0000400">
    <property type="term" value="F:four-way junction DNA binding"/>
    <property type="evidence" value="ECO:0007669"/>
    <property type="project" value="UniProtKB-UniRule"/>
</dbReference>
<dbReference type="GO" id="GO:0009378">
    <property type="term" value="F:four-way junction helicase activity"/>
    <property type="evidence" value="ECO:0007669"/>
    <property type="project" value="InterPro"/>
</dbReference>
<dbReference type="GO" id="GO:0006310">
    <property type="term" value="P:DNA recombination"/>
    <property type="evidence" value="ECO:0007669"/>
    <property type="project" value="UniProtKB-UniRule"/>
</dbReference>
<dbReference type="GO" id="GO:0006281">
    <property type="term" value="P:DNA repair"/>
    <property type="evidence" value="ECO:0007669"/>
    <property type="project" value="UniProtKB-UniRule"/>
</dbReference>
<dbReference type="CDD" id="cd00009">
    <property type="entry name" value="AAA"/>
    <property type="match status" value="1"/>
</dbReference>
<dbReference type="Gene3D" id="1.10.8.60">
    <property type="match status" value="1"/>
</dbReference>
<dbReference type="Gene3D" id="3.40.50.300">
    <property type="entry name" value="P-loop containing nucleotide triphosphate hydrolases"/>
    <property type="match status" value="1"/>
</dbReference>
<dbReference type="Gene3D" id="1.10.10.10">
    <property type="entry name" value="Winged helix-like DNA-binding domain superfamily/Winged helix DNA-binding domain"/>
    <property type="match status" value="1"/>
</dbReference>
<dbReference type="HAMAP" id="MF_00016">
    <property type="entry name" value="DNA_HJ_migration_RuvB"/>
    <property type="match status" value="1"/>
</dbReference>
<dbReference type="InterPro" id="IPR003593">
    <property type="entry name" value="AAA+_ATPase"/>
</dbReference>
<dbReference type="InterPro" id="IPR041445">
    <property type="entry name" value="AAA_lid_4"/>
</dbReference>
<dbReference type="InterPro" id="IPR004605">
    <property type="entry name" value="DNA_helicase_Holl-junc_RuvB"/>
</dbReference>
<dbReference type="InterPro" id="IPR027417">
    <property type="entry name" value="P-loop_NTPase"/>
</dbReference>
<dbReference type="InterPro" id="IPR008824">
    <property type="entry name" value="RuvB-like_N"/>
</dbReference>
<dbReference type="InterPro" id="IPR008823">
    <property type="entry name" value="RuvB_C"/>
</dbReference>
<dbReference type="InterPro" id="IPR036388">
    <property type="entry name" value="WH-like_DNA-bd_sf"/>
</dbReference>
<dbReference type="InterPro" id="IPR036390">
    <property type="entry name" value="WH_DNA-bd_sf"/>
</dbReference>
<dbReference type="NCBIfam" id="NF000868">
    <property type="entry name" value="PRK00080.1"/>
    <property type="match status" value="1"/>
</dbReference>
<dbReference type="NCBIfam" id="TIGR00635">
    <property type="entry name" value="ruvB"/>
    <property type="match status" value="1"/>
</dbReference>
<dbReference type="PANTHER" id="PTHR42848">
    <property type="match status" value="1"/>
</dbReference>
<dbReference type="PANTHER" id="PTHR42848:SF1">
    <property type="entry name" value="HOLLIDAY JUNCTION BRANCH MIGRATION COMPLEX SUBUNIT RUVB"/>
    <property type="match status" value="1"/>
</dbReference>
<dbReference type="Pfam" id="PF17864">
    <property type="entry name" value="AAA_lid_4"/>
    <property type="match status" value="1"/>
</dbReference>
<dbReference type="Pfam" id="PF05491">
    <property type="entry name" value="RuvB_C"/>
    <property type="match status" value="1"/>
</dbReference>
<dbReference type="Pfam" id="PF05496">
    <property type="entry name" value="RuvB_N"/>
    <property type="match status" value="1"/>
</dbReference>
<dbReference type="SMART" id="SM00382">
    <property type="entry name" value="AAA"/>
    <property type="match status" value="1"/>
</dbReference>
<dbReference type="SUPFAM" id="SSF52540">
    <property type="entry name" value="P-loop containing nucleoside triphosphate hydrolases"/>
    <property type="match status" value="1"/>
</dbReference>
<dbReference type="SUPFAM" id="SSF46785">
    <property type="entry name" value="Winged helix' DNA-binding domain"/>
    <property type="match status" value="1"/>
</dbReference>
<organism>
    <name type="scientific">Ehrlichia canis (strain Jake)</name>
    <dbReference type="NCBI Taxonomy" id="269484"/>
    <lineage>
        <taxon>Bacteria</taxon>
        <taxon>Pseudomonadati</taxon>
        <taxon>Pseudomonadota</taxon>
        <taxon>Alphaproteobacteria</taxon>
        <taxon>Rickettsiales</taxon>
        <taxon>Anaplasmataceae</taxon>
        <taxon>Ehrlichia</taxon>
    </lineage>
</organism>
<sequence length="329" mass="36998">MKNILQSTECLEDQQNVSIRPNLLDEFIGQSSVVNNLKIFINAAYTRKEPMDHVLLYGPPGLGKTTLAHIIAKELKVNFRSTAGPLLSKAGDLAAILTNLQAKDILFIDEIHRLNRNIEEILYSAMEDFCLDIIVGEGCGARTLRVDLPKFTLVGATTRIGLLSNPLRDRFGIPIHLEFYSTEELIKVIQRAAKVIKTDISDSGAQEISLRARGTPRIALRLLRRIRDFIEVTEHNKTITDTFADKALLRLGIDKLGLDRQDIQYLKFIHDSNNPTGIDTISSGLSEDTGNIEETIEPYLIKINFIQRTPRGRVITQKAISYLKEQSYI</sequence>